<feature type="chain" id="PRO_1000045360" description="Probable transcriptional regulatory protein H16_A0916">
    <location>
        <begin position="1"/>
        <end position="241"/>
    </location>
</feature>
<sequence length="241" mass="25845">MAGHSKWANIKHKKAAADAKRGKIWTRLIKEITVAAKLGGGDVDSNPRLRLSIDKAMDANMPKDNIQRAIQRGVGGMEGANYEEIRYEGYGLAGAAIIVDCLTDNRTRTVAEVRHAFSKHGGNMGTEGSVAFMFTHCGQFLYAPGTPEDKLMEAALEAGADDVVTNDDGSIEVTCPPNDFSAVKAALEAAGFKAEVADVVMKPQNEVSFAGDDAAKMQKLLDALENLDDVQEVFTNAVIED</sequence>
<name>Y916_CUPNH</name>
<keyword id="KW-0963">Cytoplasm</keyword>
<keyword id="KW-0238">DNA-binding</keyword>
<keyword id="KW-1185">Reference proteome</keyword>
<keyword id="KW-0804">Transcription</keyword>
<keyword id="KW-0805">Transcription regulation</keyword>
<proteinExistence type="inferred from homology"/>
<accession>Q0KD59</accession>
<comment type="subcellular location">
    <subcellularLocation>
        <location evidence="1">Cytoplasm</location>
    </subcellularLocation>
</comment>
<comment type="similarity">
    <text evidence="1">Belongs to the TACO1 family.</text>
</comment>
<evidence type="ECO:0000255" key="1">
    <source>
        <dbReference type="HAMAP-Rule" id="MF_00693"/>
    </source>
</evidence>
<dbReference type="EMBL" id="AM260479">
    <property type="protein sequence ID" value="CAJ92062.1"/>
    <property type="molecule type" value="Genomic_DNA"/>
</dbReference>
<dbReference type="RefSeq" id="WP_010812905.1">
    <property type="nucleotide sequence ID" value="NZ_CP039287.1"/>
</dbReference>
<dbReference type="SMR" id="Q0KD59"/>
<dbReference type="STRING" id="381666.H16_A0916"/>
<dbReference type="KEGG" id="reh:H16_A0916"/>
<dbReference type="eggNOG" id="COG0217">
    <property type="taxonomic scope" value="Bacteria"/>
</dbReference>
<dbReference type="HOGENOM" id="CLU_062974_2_2_4"/>
<dbReference type="OrthoDB" id="9781053at2"/>
<dbReference type="Proteomes" id="UP000008210">
    <property type="component" value="Chromosome 1"/>
</dbReference>
<dbReference type="GO" id="GO:0005829">
    <property type="term" value="C:cytosol"/>
    <property type="evidence" value="ECO:0007669"/>
    <property type="project" value="TreeGrafter"/>
</dbReference>
<dbReference type="GO" id="GO:0003677">
    <property type="term" value="F:DNA binding"/>
    <property type="evidence" value="ECO:0007669"/>
    <property type="project" value="UniProtKB-UniRule"/>
</dbReference>
<dbReference type="GO" id="GO:0006355">
    <property type="term" value="P:regulation of DNA-templated transcription"/>
    <property type="evidence" value="ECO:0007669"/>
    <property type="project" value="UniProtKB-UniRule"/>
</dbReference>
<dbReference type="FunFam" id="1.10.10.200:FF:000001">
    <property type="entry name" value="Probable transcriptional regulatory protein YebC"/>
    <property type="match status" value="1"/>
</dbReference>
<dbReference type="FunFam" id="3.30.70.980:FF:000002">
    <property type="entry name" value="Probable transcriptional regulatory protein YebC"/>
    <property type="match status" value="1"/>
</dbReference>
<dbReference type="Gene3D" id="1.10.10.200">
    <property type="match status" value="1"/>
</dbReference>
<dbReference type="Gene3D" id="3.30.70.980">
    <property type="match status" value="2"/>
</dbReference>
<dbReference type="HAMAP" id="MF_00693">
    <property type="entry name" value="Transcrip_reg_TACO1"/>
    <property type="match status" value="1"/>
</dbReference>
<dbReference type="InterPro" id="IPR017856">
    <property type="entry name" value="Integrase-like_N"/>
</dbReference>
<dbReference type="InterPro" id="IPR048300">
    <property type="entry name" value="TACO1_YebC-like_2nd/3rd_dom"/>
</dbReference>
<dbReference type="InterPro" id="IPR049083">
    <property type="entry name" value="TACO1_YebC_N"/>
</dbReference>
<dbReference type="InterPro" id="IPR002876">
    <property type="entry name" value="Transcrip_reg_TACO1-like"/>
</dbReference>
<dbReference type="InterPro" id="IPR026564">
    <property type="entry name" value="Transcrip_reg_TACO1-like_dom3"/>
</dbReference>
<dbReference type="InterPro" id="IPR029072">
    <property type="entry name" value="YebC-like"/>
</dbReference>
<dbReference type="NCBIfam" id="NF001030">
    <property type="entry name" value="PRK00110.1"/>
    <property type="match status" value="1"/>
</dbReference>
<dbReference type="NCBIfam" id="NF009044">
    <property type="entry name" value="PRK12378.1"/>
    <property type="match status" value="1"/>
</dbReference>
<dbReference type="NCBIfam" id="TIGR01033">
    <property type="entry name" value="YebC/PmpR family DNA-binding transcriptional regulator"/>
    <property type="match status" value="1"/>
</dbReference>
<dbReference type="PANTHER" id="PTHR12532:SF6">
    <property type="entry name" value="TRANSCRIPTIONAL REGULATORY PROTEIN YEBC-RELATED"/>
    <property type="match status" value="1"/>
</dbReference>
<dbReference type="PANTHER" id="PTHR12532">
    <property type="entry name" value="TRANSLATIONAL ACTIVATOR OF CYTOCHROME C OXIDASE 1"/>
    <property type="match status" value="1"/>
</dbReference>
<dbReference type="Pfam" id="PF20772">
    <property type="entry name" value="TACO1_YebC_N"/>
    <property type="match status" value="1"/>
</dbReference>
<dbReference type="Pfam" id="PF01709">
    <property type="entry name" value="Transcrip_reg"/>
    <property type="match status" value="1"/>
</dbReference>
<dbReference type="SUPFAM" id="SSF75625">
    <property type="entry name" value="YebC-like"/>
    <property type="match status" value="1"/>
</dbReference>
<reference key="1">
    <citation type="journal article" date="2006" name="Nat. Biotechnol.">
        <title>Genome sequence of the bioplastic-producing 'Knallgas' bacterium Ralstonia eutropha H16.</title>
        <authorList>
            <person name="Pohlmann A."/>
            <person name="Fricke W.F."/>
            <person name="Reinecke F."/>
            <person name="Kusian B."/>
            <person name="Liesegang H."/>
            <person name="Cramm R."/>
            <person name="Eitinger T."/>
            <person name="Ewering C."/>
            <person name="Poetter M."/>
            <person name="Schwartz E."/>
            <person name="Strittmatter A."/>
            <person name="Voss I."/>
            <person name="Gottschalk G."/>
            <person name="Steinbuechel A."/>
            <person name="Friedrich B."/>
            <person name="Bowien B."/>
        </authorList>
    </citation>
    <scope>NUCLEOTIDE SEQUENCE [LARGE SCALE GENOMIC DNA]</scope>
    <source>
        <strain>ATCC 17699 / DSM 428 / KCTC 22496 / NCIMB 10442 / H16 / Stanier 337</strain>
    </source>
</reference>
<protein>
    <recommendedName>
        <fullName evidence="1">Probable transcriptional regulatory protein H16_A0916</fullName>
    </recommendedName>
</protein>
<gene>
    <name type="ordered locus">H16_A0916</name>
</gene>
<organism>
    <name type="scientific">Cupriavidus necator (strain ATCC 17699 / DSM 428 / KCTC 22496 / NCIMB 10442 / H16 / Stanier 337)</name>
    <name type="common">Ralstonia eutropha</name>
    <dbReference type="NCBI Taxonomy" id="381666"/>
    <lineage>
        <taxon>Bacteria</taxon>
        <taxon>Pseudomonadati</taxon>
        <taxon>Pseudomonadota</taxon>
        <taxon>Betaproteobacteria</taxon>
        <taxon>Burkholderiales</taxon>
        <taxon>Burkholderiaceae</taxon>
        <taxon>Cupriavidus</taxon>
    </lineage>
</organism>